<reference key="1">
    <citation type="journal article" date="2005" name="Genome Res.">
        <title>The Chlamydophila abortus genome sequence reveals an array of variable proteins that contribute to interspecies variation.</title>
        <authorList>
            <person name="Thomson N.R."/>
            <person name="Yeats C."/>
            <person name="Bell K."/>
            <person name="Holden M.T.G."/>
            <person name="Bentley S.D."/>
            <person name="Livingstone M."/>
            <person name="Cerdeno-Tarraga A.-M."/>
            <person name="Harris B."/>
            <person name="Doggett J."/>
            <person name="Ormond D."/>
            <person name="Mungall K."/>
            <person name="Clarke K."/>
            <person name="Feltwell T."/>
            <person name="Hance Z."/>
            <person name="Sanders M."/>
            <person name="Quail M.A."/>
            <person name="Price C."/>
            <person name="Barrell B.G."/>
            <person name="Parkhill J."/>
            <person name="Longbottom D."/>
        </authorList>
    </citation>
    <scope>NUCLEOTIDE SEQUENCE [LARGE SCALE GENOMIC DNA]</scope>
    <source>
        <strain>DSM 27085 / S26/3</strain>
    </source>
</reference>
<protein>
    <recommendedName>
        <fullName evidence="1">Tetraacyldisaccharide 4'-kinase</fullName>
        <ecNumber evidence="1">2.7.1.130</ecNumber>
    </recommendedName>
    <alternativeName>
        <fullName evidence="1">Lipid A 4'-kinase</fullName>
    </alternativeName>
</protein>
<feature type="chain" id="PRO_0000229951" description="Tetraacyldisaccharide 4'-kinase">
    <location>
        <begin position="1"/>
        <end position="367"/>
    </location>
</feature>
<feature type="binding site" evidence="1">
    <location>
        <begin position="68"/>
        <end position="75"/>
    </location>
    <ligand>
        <name>ATP</name>
        <dbReference type="ChEBI" id="CHEBI:30616"/>
    </ligand>
</feature>
<sequence length="367" mass="40360">MKTRFPSPFFIFYRRLTVAISLGKILGWGCFGKLLSWIFAATVSFRRKVLSSAPHRVSSTVISVGNIVLGGSGKTPTVLWLAEVLKARGYSCAILSRGYKGKCSGQRKLTIVDPEIHDAAYVGDEPLLMAGKLSKGAVFVHKDRRLAAKEVAKNFDILLLDDGFQNNKLHKDVEIVVVNGQDPLGGGAFFPRGRLRDSPKRLQEADFIIVNGSCGLENQKLLHTWCTSPKIFVEPRISQVLWDSRGEKLPLDSLSGLAAGVFCGLGFPQGFLDMLKRAGVKIVGTYLLPDHAGITKKELHYFSSMTAMRQGEGILCTEKDGIKLGNLIHEPGILPIGKVQMEFDFTHQEDATAALLDKIDRIHNGKR</sequence>
<keyword id="KW-0067">ATP-binding</keyword>
<keyword id="KW-0418">Kinase</keyword>
<keyword id="KW-0441">Lipid A biosynthesis</keyword>
<keyword id="KW-0444">Lipid biosynthesis</keyword>
<keyword id="KW-0443">Lipid metabolism</keyword>
<keyword id="KW-0547">Nucleotide-binding</keyword>
<keyword id="KW-0808">Transferase</keyword>
<proteinExistence type="inferred from homology"/>
<comment type="function">
    <text evidence="1">Transfers the gamma-phosphate of ATP to the 4'-position of a tetraacyldisaccharide 1-phosphate intermediate (termed DS-1-P) to form tetraacyldisaccharide 1,4'-bis-phosphate (lipid IVA).</text>
</comment>
<comment type="catalytic activity">
    <reaction evidence="1">
        <text>a lipid A disaccharide + ATP = a lipid IVA + ADP + H(+)</text>
        <dbReference type="Rhea" id="RHEA:67840"/>
        <dbReference type="ChEBI" id="CHEBI:15378"/>
        <dbReference type="ChEBI" id="CHEBI:30616"/>
        <dbReference type="ChEBI" id="CHEBI:176343"/>
        <dbReference type="ChEBI" id="CHEBI:176425"/>
        <dbReference type="ChEBI" id="CHEBI:456216"/>
        <dbReference type="EC" id="2.7.1.130"/>
    </reaction>
</comment>
<comment type="pathway">
    <text evidence="1">Glycolipid biosynthesis; lipid IV(A) biosynthesis; lipid IV(A) from (3R)-3-hydroxytetradecanoyl-[acyl-carrier-protein] and UDP-N-acetyl-alpha-D-glucosamine: step 6/6.</text>
</comment>
<comment type="similarity">
    <text evidence="1">Belongs to the LpxK family.</text>
</comment>
<comment type="sequence caution" evidence="2">
    <conflict type="erroneous initiation">
        <sequence resource="EMBL-CDS" id="CAH63669"/>
    </conflict>
</comment>
<evidence type="ECO:0000255" key="1">
    <source>
        <dbReference type="HAMAP-Rule" id="MF_00409"/>
    </source>
</evidence>
<evidence type="ECO:0000305" key="2"/>
<gene>
    <name evidence="1" type="primary">lpxK</name>
    <name type="ordered locus">CAB211</name>
</gene>
<dbReference type="EC" id="2.7.1.130" evidence="1"/>
<dbReference type="EMBL" id="CR848038">
    <property type="protein sequence ID" value="CAH63669.1"/>
    <property type="status" value="ALT_INIT"/>
    <property type="molecule type" value="Genomic_DNA"/>
</dbReference>
<dbReference type="RefSeq" id="WP_041461312.1">
    <property type="nucleotide sequence ID" value="NC_004552.2"/>
</dbReference>
<dbReference type="SMR" id="Q5L6Q2"/>
<dbReference type="KEGG" id="cab:CAB211"/>
<dbReference type="eggNOG" id="COG1663">
    <property type="taxonomic scope" value="Bacteria"/>
</dbReference>
<dbReference type="HOGENOM" id="CLU_038816_6_0_0"/>
<dbReference type="UniPathway" id="UPA00359">
    <property type="reaction ID" value="UER00482"/>
</dbReference>
<dbReference type="Proteomes" id="UP000001012">
    <property type="component" value="Chromosome"/>
</dbReference>
<dbReference type="GO" id="GO:0005886">
    <property type="term" value="C:plasma membrane"/>
    <property type="evidence" value="ECO:0007669"/>
    <property type="project" value="TreeGrafter"/>
</dbReference>
<dbReference type="GO" id="GO:0005524">
    <property type="term" value="F:ATP binding"/>
    <property type="evidence" value="ECO:0007669"/>
    <property type="project" value="UniProtKB-UniRule"/>
</dbReference>
<dbReference type="GO" id="GO:0009029">
    <property type="term" value="F:tetraacyldisaccharide 4'-kinase activity"/>
    <property type="evidence" value="ECO:0007669"/>
    <property type="project" value="UniProtKB-UniRule"/>
</dbReference>
<dbReference type="GO" id="GO:0009245">
    <property type="term" value="P:lipid A biosynthetic process"/>
    <property type="evidence" value="ECO:0007669"/>
    <property type="project" value="UniProtKB-UniRule"/>
</dbReference>
<dbReference type="GO" id="GO:0009244">
    <property type="term" value="P:lipopolysaccharide core region biosynthetic process"/>
    <property type="evidence" value="ECO:0007669"/>
    <property type="project" value="TreeGrafter"/>
</dbReference>
<dbReference type="HAMAP" id="MF_00409">
    <property type="entry name" value="LpxK"/>
    <property type="match status" value="1"/>
</dbReference>
<dbReference type="InterPro" id="IPR003758">
    <property type="entry name" value="LpxK"/>
</dbReference>
<dbReference type="InterPro" id="IPR027417">
    <property type="entry name" value="P-loop_NTPase"/>
</dbReference>
<dbReference type="NCBIfam" id="TIGR00682">
    <property type="entry name" value="lpxK"/>
    <property type="match status" value="1"/>
</dbReference>
<dbReference type="PANTHER" id="PTHR42724">
    <property type="entry name" value="TETRAACYLDISACCHARIDE 4'-KINASE"/>
    <property type="match status" value="1"/>
</dbReference>
<dbReference type="PANTHER" id="PTHR42724:SF1">
    <property type="entry name" value="TETRAACYLDISACCHARIDE 4'-KINASE, MITOCHONDRIAL-RELATED"/>
    <property type="match status" value="1"/>
</dbReference>
<dbReference type="Pfam" id="PF02606">
    <property type="entry name" value="LpxK"/>
    <property type="match status" value="1"/>
</dbReference>
<dbReference type="SUPFAM" id="SSF52540">
    <property type="entry name" value="P-loop containing nucleoside triphosphate hydrolases"/>
    <property type="match status" value="1"/>
</dbReference>
<organism>
    <name type="scientific">Chlamydia abortus (strain DSM 27085 / S26/3)</name>
    <name type="common">Chlamydophila abortus</name>
    <dbReference type="NCBI Taxonomy" id="218497"/>
    <lineage>
        <taxon>Bacteria</taxon>
        <taxon>Pseudomonadati</taxon>
        <taxon>Chlamydiota</taxon>
        <taxon>Chlamydiia</taxon>
        <taxon>Chlamydiales</taxon>
        <taxon>Chlamydiaceae</taxon>
        <taxon>Chlamydia/Chlamydophila group</taxon>
        <taxon>Chlamydia</taxon>
    </lineage>
</organism>
<accession>Q5L6Q2</accession>
<name>LPXK_CHLAB</name>